<sequence>MESALPSILTLVIIAEFIIGNLSNGFIVLINYIDWVSKRELSSVDKLLIILAISRIGLIWEILVSWFLALHYLAIFVSGTGLRIMIFSWIVSNHFSLWLATILSIFYLLKIASFSSPAFLYLKWRVNKVILMILLGSLVFLFLNLIQINIHIKDWLDRYEGNTTWNFSMSDFVTFSVSVKFTMTMFSLTPFTVALISFSLLIFSLQKHLQKMQLNYKGHREPRTKVHTNALKIVISFLLLYASFFLCILISWISELYQNTAIYMLCETIGLFYPSSHSFLLILGNPKLRQAFLLVAAKVWAKR</sequence>
<feature type="chain" id="PRO_0000082251" description="Taste receptor type 2 member 13">
    <location>
        <begin position="1"/>
        <end position="303"/>
    </location>
</feature>
<feature type="topological domain" description="Extracellular" evidence="2">
    <location>
        <begin position="1"/>
        <end position="7"/>
    </location>
</feature>
<feature type="transmembrane region" description="Helical; Name=1" evidence="2">
    <location>
        <begin position="8"/>
        <end position="28"/>
    </location>
</feature>
<feature type="topological domain" description="Cytoplasmic" evidence="2">
    <location>
        <begin position="29"/>
        <end position="55"/>
    </location>
</feature>
<feature type="transmembrane region" description="Helical; Name=2" evidence="2">
    <location>
        <begin position="56"/>
        <end position="76"/>
    </location>
</feature>
<feature type="topological domain" description="Extracellular" evidence="2">
    <location>
        <begin position="77"/>
        <end position="85"/>
    </location>
</feature>
<feature type="transmembrane region" description="Helical; Name=3" evidence="2">
    <location>
        <begin position="86"/>
        <end position="106"/>
    </location>
</feature>
<feature type="topological domain" description="Cytoplasmic" evidence="2">
    <location>
        <begin position="107"/>
        <end position="128"/>
    </location>
</feature>
<feature type="transmembrane region" description="Helical; Name=4" evidence="2">
    <location>
        <begin position="129"/>
        <end position="149"/>
    </location>
</feature>
<feature type="topological domain" description="Extracellular" evidence="2">
    <location>
        <begin position="150"/>
        <end position="184"/>
    </location>
</feature>
<feature type="transmembrane region" description="Helical; Name=5" evidence="2">
    <location>
        <begin position="185"/>
        <end position="205"/>
    </location>
</feature>
<feature type="topological domain" description="Cytoplasmic" evidence="2">
    <location>
        <begin position="206"/>
        <end position="232"/>
    </location>
</feature>
<feature type="transmembrane region" description="Helical; Name=6" evidence="2">
    <location>
        <begin position="233"/>
        <end position="253"/>
    </location>
</feature>
<feature type="topological domain" description="Extracellular" evidence="2">
    <location>
        <begin position="254"/>
        <end position="261"/>
    </location>
</feature>
<feature type="transmembrane region" description="Helical; Name=7" evidence="2">
    <location>
        <begin position="262"/>
        <end position="282"/>
    </location>
</feature>
<feature type="topological domain" description="Cytoplasmic" evidence="2">
    <location>
        <begin position="283"/>
        <end position="303"/>
    </location>
</feature>
<feature type="glycosylation site" description="N-linked (GlcNAc...) asparagine" evidence="2">
    <location>
        <position position="162"/>
    </location>
</feature>
<feature type="glycosylation site" description="N-linked (GlcNAc...) asparagine" evidence="2">
    <location>
        <position position="166"/>
    </location>
</feature>
<name>T2R13_PONPY</name>
<reference key="1">
    <citation type="journal article" date="2005" name="Mol. Biol. Evol.">
        <title>Evolution of bitter taste receptors in humans and apes.</title>
        <authorList>
            <person name="Fischer A."/>
            <person name="Gilad Y."/>
            <person name="Man O."/>
            <person name="Paeaebo S."/>
        </authorList>
    </citation>
    <scope>NUCLEOTIDE SEQUENCE [GENOMIC DNA]</scope>
</reference>
<dbReference type="EMBL" id="AY724976">
    <property type="protein sequence ID" value="AAU21168.1"/>
    <property type="molecule type" value="Genomic_DNA"/>
</dbReference>
<dbReference type="RefSeq" id="XP_063528503.1">
    <property type="nucleotide sequence ID" value="XM_063672433.1"/>
</dbReference>
<dbReference type="SMR" id="Q645V1"/>
<dbReference type="GlyCosmos" id="Q645V1">
    <property type="glycosylation" value="2 sites, No reported glycans"/>
</dbReference>
<dbReference type="GeneID" id="129010827"/>
<dbReference type="GO" id="GO:0005886">
    <property type="term" value="C:plasma membrane"/>
    <property type="evidence" value="ECO:0007669"/>
    <property type="project" value="UniProtKB-ARBA"/>
</dbReference>
<dbReference type="GO" id="GO:0033038">
    <property type="term" value="F:bitter taste receptor activity"/>
    <property type="evidence" value="ECO:0007669"/>
    <property type="project" value="InterPro"/>
</dbReference>
<dbReference type="GO" id="GO:0004930">
    <property type="term" value="F:G protein-coupled receptor activity"/>
    <property type="evidence" value="ECO:0007669"/>
    <property type="project" value="UniProtKB-KW"/>
</dbReference>
<dbReference type="FunFam" id="1.20.1070.10:FF:000042">
    <property type="entry name" value="Taste receptor type 2 member 7"/>
    <property type="match status" value="1"/>
</dbReference>
<dbReference type="Gene3D" id="1.20.1070.10">
    <property type="entry name" value="Rhodopsin 7-helix transmembrane proteins"/>
    <property type="match status" value="1"/>
</dbReference>
<dbReference type="InterPro" id="IPR007960">
    <property type="entry name" value="TAS2R"/>
</dbReference>
<dbReference type="PANTHER" id="PTHR11394">
    <property type="entry name" value="TASTE RECEPTOR TYPE 2"/>
    <property type="match status" value="1"/>
</dbReference>
<dbReference type="PANTHER" id="PTHR11394:SF28">
    <property type="entry name" value="TASTE RECEPTOR TYPE 2 MEMBER 13"/>
    <property type="match status" value="1"/>
</dbReference>
<dbReference type="Pfam" id="PF05296">
    <property type="entry name" value="TAS2R"/>
    <property type="match status" value="1"/>
</dbReference>
<dbReference type="SUPFAM" id="SSF81321">
    <property type="entry name" value="Family A G protein-coupled receptor-like"/>
    <property type="match status" value="1"/>
</dbReference>
<gene>
    <name type="primary">TAS2R13</name>
</gene>
<comment type="function">
    <text evidence="1">Receptor that may play a role in the perception of bitterness and is gustducin-linked. May play a role in sensing the chemical composition of the gastrointestinal content. The activity of this receptor may stimulate alpha gustducin, mediate PLC-beta-2 activation and lead to the gating of TRPM5 (By similarity).</text>
</comment>
<comment type="subcellular location">
    <subcellularLocation>
        <location>Membrane</location>
        <topology>Multi-pass membrane protein</topology>
    </subcellularLocation>
</comment>
<comment type="miscellaneous">
    <text>Most taste cells may be activated by a limited number of bitter compounds; individual taste cells can discriminate among bitter stimuli.</text>
</comment>
<comment type="similarity">
    <text evidence="3">Belongs to the G-protein coupled receptor T2R family.</text>
</comment>
<protein>
    <recommendedName>
        <fullName>Taste receptor type 2 member 13</fullName>
        <shortName>T2R13</shortName>
    </recommendedName>
</protein>
<organism>
    <name type="scientific">Pongo pygmaeus</name>
    <name type="common">Bornean orangutan</name>
    <dbReference type="NCBI Taxonomy" id="9600"/>
    <lineage>
        <taxon>Eukaryota</taxon>
        <taxon>Metazoa</taxon>
        <taxon>Chordata</taxon>
        <taxon>Craniata</taxon>
        <taxon>Vertebrata</taxon>
        <taxon>Euteleostomi</taxon>
        <taxon>Mammalia</taxon>
        <taxon>Eutheria</taxon>
        <taxon>Euarchontoglires</taxon>
        <taxon>Primates</taxon>
        <taxon>Haplorrhini</taxon>
        <taxon>Catarrhini</taxon>
        <taxon>Hominidae</taxon>
        <taxon>Pongo</taxon>
    </lineage>
</organism>
<keyword id="KW-0297">G-protein coupled receptor</keyword>
<keyword id="KW-0325">Glycoprotein</keyword>
<keyword id="KW-0472">Membrane</keyword>
<keyword id="KW-0675">Receptor</keyword>
<keyword id="KW-0716">Sensory transduction</keyword>
<keyword id="KW-0919">Taste</keyword>
<keyword id="KW-0807">Transducer</keyword>
<keyword id="KW-0812">Transmembrane</keyword>
<keyword id="KW-1133">Transmembrane helix</keyword>
<proteinExistence type="inferred from homology"/>
<accession>Q645V1</accession>
<evidence type="ECO:0000250" key="1"/>
<evidence type="ECO:0000255" key="2"/>
<evidence type="ECO:0000305" key="3"/>